<sequence length="138" mass="14620">MPPKKAAASSAKKGQKTRRREKKNVPHGAAHIKSTFNNTIVSITDPQGNVIAWASSGHVGFKGSRKSTPFAAQLAAENAARKAQEHGVKKVDVFVKGPGSGRETAIRSLQAAGLEVGAIADVTPQPHNGCRPPKRRRV</sequence>
<comment type="function">
    <text evidence="1">Located on the platform of the 30S subunit, it bridges several disparate RNA helices of the 16S rRNA. Forms part of the Shine-Dalgarno cleft in the 70S ribosome.</text>
</comment>
<comment type="subunit">
    <text evidence="1">Part of the 30S ribosomal subunit. Interacts with proteins S7 and S18. Binds to IF-3.</text>
</comment>
<comment type="similarity">
    <text evidence="1">Belongs to the universal ribosomal protein uS11 family.</text>
</comment>
<accession>A1UBY3</accession>
<keyword id="KW-0687">Ribonucleoprotein</keyword>
<keyword id="KW-0689">Ribosomal protein</keyword>
<keyword id="KW-0694">RNA-binding</keyword>
<keyword id="KW-0699">rRNA-binding</keyword>
<evidence type="ECO:0000255" key="1">
    <source>
        <dbReference type="HAMAP-Rule" id="MF_01310"/>
    </source>
</evidence>
<evidence type="ECO:0000256" key="2">
    <source>
        <dbReference type="SAM" id="MobiDB-lite"/>
    </source>
</evidence>
<evidence type="ECO:0000305" key="3"/>
<organism>
    <name type="scientific">Mycobacterium sp. (strain KMS)</name>
    <dbReference type="NCBI Taxonomy" id="189918"/>
    <lineage>
        <taxon>Bacteria</taxon>
        <taxon>Bacillati</taxon>
        <taxon>Actinomycetota</taxon>
        <taxon>Actinomycetes</taxon>
        <taxon>Mycobacteriales</taxon>
        <taxon>Mycobacteriaceae</taxon>
        <taxon>Mycobacterium</taxon>
    </lineage>
</organism>
<dbReference type="EMBL" id="CP000518">
    <property type="protein sequence ID" value="ABL90341.1"/>
    <property type="molecule type" value="Genomic_DNA"/>
</dbReference>
<dbReference type="SMR" id="A1UBY3"/>
<dbReference type="STRING" id="189918.Mkms_1128"/>
<dbReference type="KEGG" id="mkm:Mkms_1128"/>
<dbReference type="HOGENOM" id="CLU_072439_5_0_11"/>
<dbReference type="OrthoDB" id="9806415at2"/>
<dbReference type="GO" id="GO:1990904">
    <property type="term" value="C:ribonucleoprotein complex"/>
    <property type="evidence" value="ECO:0007669"/>
    <property type="project" value="UniProtKB-KW"/>
</dbReference>
<dbReference type="GO" id="GO:0005840">
    <property type="term" value="C:ribosome"/>
    <property type="evidence" value="ECO:0007669"/>
    <property type="project" value="UniProtKB-KW"/>
</dbReference>
<dbReference type="GO" id="GO:0019843">
    <property type="term" value="F:rRNA binding"/>
    <property type="evidence" value="ECO:0007669"/>
    <property type="project" value="UniProtKB-UniRule"/>
</dbReference>
<dbReference type="GO" id="GO:0003735">
    <property type="term" value="F:structural constituent of ribosome"/>
    <property type="evidence" value="ECO:0007669"/>
    <property type="project" value="InterPro"/>
</dbReference>
<dbReference type="GO" id="GO:0006412">
    <property type="term" value="P:translation"/>
    <property type="evidence" value="ECO:0007669"/>
    <property type="project" value="UniProtKB-UniRule"/>
</dbReference>
<dbReference type="FunFam" id="3.30.420.80:FF:000001">
    <property type="entry name" value="30S ribosomal protein S11"/>
    <property type="match status" value="1"/>
</dbReference>
<dbReference type="Gene3D" id="3.30.420.80">
    <property type="entry name" value="Ribosomal protein S11"/>
    <property type="match status" value="1"/>
</dbReference>
<dbReference type="HAMAP" id="MF_01310">
    <property type="entry name" value="Ribosomal_uS11"/>
    <property type="match status" value="1"/>
</dbReference>
<dbReference type="InterPro" id="IPR001971">
    <property type="entry name" value="Ribosomal_uS11"/>
</dbReference>
<dbReference type="InterPro" id="IPR019981">
    <property type="entry name" value="Ribosomal_uS11_bac-type"/>
</dbReference>
<dbReference type="InterPro" id="IPR018102">
    <property type="entry name" value="Ribosomal_uS11_CS"/>
</dbReference>
<dbReference type="InterPro" id="IPR036967">
    <property type="entry name" value="Ribosomal_uS11_sf"/>
</dbReference>
<dbReference type="NCBIfam" id="NF003698">
    <property type="entry name" value="PRK05309.1"/>
    <property type="match status" value="1"/>
</dbReference>
<dbReference type="NCBIfam" id="TIGR03632">
    <property type="entry name" value="uS11_bact"/>
    <property type="match status" value="1"/>
</dbReference>
<dbReference type="PANTHER" id="PTHR11759">
    <property type="entry name" value="40S RIBOSOMAL PROTEIN S14/30S RIBOSOMAL PROTEIN S11"/>
    <property type="match status" value="1"/>
</dbReference>
<dbReference type="Pfam" id="PF00411">
    <property type="entry name" value="Ribosomal_S11"/>
    <property type="match status" value="1"/>
</dbReference>
<dbReference type="PIRSF" id="PIRSF002131">
    <property type="entry name" value="Ribosomal_S11"/>
    <property type="match status" value="1"/>
</dbReference>
<dbReference type="SUPFAM" id="SSF53137">
    <property type="entry name" value="Translational machinery components"/>
    <property type="match status" value="1"/>
</dbReference>
<dbReference type="PROSITE" id="PS00054">
    <property type="entry name" value="RIBOSOMAL_S11"/>
    <property type="match status" value="1"/>
</dbReference>
<gene>
    <name evidence="1" type="primary">rpsK</name>
    <name type="ordered locus">Mkms_1128</name>
</gene>
<feature type="chain" id="PRO_0000294798" description="Small ribosomal subunit protein uS11">
    <location>
        <begin position="1"/>
        <end position="138"/>
    </location>
</feature>
<feature type="region of interest" description="Disordered" evidence="2">
    <location>
        <begin position="1"/>
        <end position="28"/>
    </location>
</feature>
<feature type="compositionally biased region" description="Low complexity" evidence="2">
    <location>
        <begin position="1"/>
        <end position="12"/>
    </location>
</feature>
<feature type="compositionally biased region" description="Basic residues" evidence="2">
    <location>
        <begin position="13"/>
        <end position="22"/>
    </location>
</feature>
<protein>
    <recommendedName>
        <fullName evidence="1">Small ribosomal subunit protein uS11</fullName>
    </recommendedName>
    <alternativeName>
        <fullName evidence="3">30S ribosomal protein S11</fullName>
    </alternativeName>
</protein>
<reference key="1">
    <citation type="submission" date="2006-12" db="EMBL/GenBank/DDBJ databases">
        <title>Complete sequence of chromosome of Mycobacterium sp. KMS.</title>
        <authorList>
            <consortium name="US DOE Joint Genome Institute"/>
            <person name="Copeland A."/>
            <person name="Lucas S."/>
            <person name="Lapidus A."/>
            <person name="Barry K."/>
            <person name="Detter J.C."/>
            <person name="Glavina del Rio T."/>
            <person name="Hammon N."/>
            <person name="Israni S."/>
            <person name="Dalin E."/>
            <person name="Tice H."/>
            <person name="Pitluck S."/>
            <person name="Kiss H."/>
            <person name="Brettin T."/>
            <person name="Bruce D."/>
            <person name="Han C."/>
            <person name="Tapia R."/>
            <person name="Gilna P."/>
            <person name="Schmutz J."/>
            <person name="Larimer F."/>
            <person name="Land M."/>
            <person name="Hauser L."/>
            <person name="Kyrpides N."/>
            <person name="Mikhailova N."/>
            <person name="Miller C.D."/>
            <person name="Richardson P."/>
        </authorList>
    </citation>
    <scope>NUCLEOTIDE SEQUENCE [LARGE SCALE GENOMIC DNA]</scope>
    <source>
        <strain>KMS</strain>
    </source>
</reference>
<name>RS11_MYCSK</name>
<proteinExistence type="inferred from homology"/>